<feature type="chain" id="PRO_1000118507" description="Phosphomethylpyrimidine synthase">
    <location>
        <begin position="1"/>
        <end position="432"/>
    </location>
</feature>
<feature type="binding site" evidence="1">
    <location>
        <position position="66"/>
    </location>
    <ligand>
        <name>substrate</name>
    </ligand>
</feature>
<feature type="binding site" evidence="1">
    <location>
        <position position="95"/>
    </location>
    <ligand>
        <name>substrate</name>
    </ligand>
</feature>
<feature type="binding site" evidence="1">
    <location>
        <position position="124"/>
    </location>
    <ligand>
        <name>substrate</name>
    </ligand>
</feature>
<feature type="binding site" evidence="1">
    <location>
        <position position="163"/>
    </location>
    <ligand>
        <name>substrate</name>
    </ligand>
</feature>
<feature type="binding site" evidence="1">
    <location>
        <begin position="185"/>
        <end position="187"/>
    </location>
    <ligand>
        <name>substrate</name>
    </ligand>
</feature>
<feature type="binding site" evidence="1">
    <location>
        <begin position="226"/>
        <end position="229"/>
    </location>
    <ligand>
        <name>substrate</name>
    </ligand>
</feature>
<feature type="binding site" evidence="1">
    <location>
        <position position="265"/>
    </location>
    <ligand>
        <name>substrate</name>
    </ligand>
</feature>
<feature type="binding site" evidence="1">
    <location>
        <position position="269"/>
    </location>
    <ligand>
        <name>Zn(2+)</name>
        <dbReference type="ChEBI" id="CHEBI:29105"/>
    </ligand>
</feature>
<feature type="binding site" evidence="1">
    <location>
        <position position="292"/>
    </location>
    <ligand>
        <name>substrate</name>
    </ligand>
</feature>
<feature type="binding site" evidence="1">
    <location>
        <position position="333"/>
    </location>
    <ligand>
        <name>Zn(2+)</name>
        <dbReference type="ChEBI" id="CHEBI:29105"/>
    </ligand>
</feature>
<feature type="binding site" evidence="1">
    <location>
        <position position="409"/>
    </location>
    <ligand>
        <name>[4Fe-4S] cluster</name>
        <dbReference type="ChEBI" id="CHEBI:49883"/>
        <note>4Fe-4S-S-AdoMet</note>
    </ligand>
</feature>
<feature type="binding site" evidence="1">
    <location>
        <position position="412"/>
    </location>
    <ligand>
        <name>[4Fe-4S] cluster</name>
        <dbReference type="ChEBI" id="CHEBI:49883"/>
        <note>4Fe-4S-S-AdoMet</note>
    </ligand>
</feature>
<feature type="binding site" evidence="1">
    <location>
        <position position="416"/>
    </location>
    <ligand>
        <name>[4Fe-4S] cluster</name>
        <dbReference type="ChEBI" id="CHEBI:49883"/>
        <note>4Fe-4S-S-AdoMet</note>
    </ligand>
</feature>
<proteinExistence type="inferred from homology"/>
<evidence type="ECO:0000255" key="1">
    <source>
        <dbReference type="HAMAP-Rule" id="MF_00089"/>
    </source>
</evidence>
<sequence>MTQLQEARKGIITPEMVQAAELEGITGEELRQKIAIGEAVLPCNINHQGLRPMAVGKGLSTKVNANIGTSDAYPELAPELSKLEIAVAAGVHSIMDLSTGGDIDEIRRRIIQDSPVMVGTVPLYQVMVDTHKAGRGLVEMTDDEIFAGIEKHCRDGADFITVHCGVTLEVIQELREQGRVMDIVSRGGSFITAWMLHHQRQNPLFEQYDRLLNIALHYDVTLSLGDGLRPGCLADATDGPQIKELITLGSLVKRAQEAGVQVMVEGPGHVPLHQIETNMQLAKTLCHNAPFYVLGPLVTDVAPGYDHITSAIGGAIAASSGADFLCYVTPAEHLGLPTEEDVKEGVIAARIAAHAADLVKGIKGAWEWDLEMAKARKALDWPKQIQLSIDPEKAGRMRKAKNEDSQERCTMCGKFCAYQLISDYMGTPFKGC</sequence>
<organism>
    <name type="scientific">Desulfitobacterium hafniense (strain DSM 10664 / DCB-2)</name>
    <dbReference type="NCBI Taxonomy" id="272564"/>
    <lineage>
        <taxon>Bacteria</taxon>
        <taxon>Bacillati</taxon>
        <taxon>Bacillota</taxon>
        <taxon>Clostridia</taxon>
        <taxon>Eubacteriales</taxon>
        <taxon>Desulfitobacteriaceae</taxon>
        <taxon>Desulfitobacterium</taxon>
    </lineage>
</organism>
<reference key="1">
    <citation type="journal article" date="2012" name="BMC Microbiol.">
        <title>Genome sequence of Desulfitobacterium hafniense DCB-2, a Gram-positive anaerobe capable of dehalogenation and metal reduction.</title>
        <authorList>
            <person name="Kim S.H."/>
            <person name="Harzman C."/>
            <person name="Davis J.K."/>
            <person name="Hutcheson R."/>
            <person name="Broderick J.B."/>
            <person name="Marsh T.L."/>
            <person name="Tiedje J.M."/>
        </authorList>
    </citation>
    <scope>NUCLEOTIDE SEQUENCE [LARGE SCALE GENOMIC DNA]</scope>
    <source>
        <strain>DSM 10664 / DCB-2</strain>
    </source>
</reference>
<keyword id="KW-0004">4Fe-4S</keyword>
<keyword id="KW-0408">Iron</keyword>
<keyword id="KW-0411">Iron-sulfur</keyword>
<keyword id="KW-0456">Lyase</keyword>
<keyword id="KW-0479">Metal-binding</keyword>
<keyword id="KW-0949">S-adenosyl-L-methionine</keyword>
<keyword id="KW-0784">Thiamine biosynthesis</keyword>
<keyword id="KW-0862">Zinc</keyword>
<protein>
    <recommendedName>
        <fullName evidence="1">Phosphomethylpyrimidine synthase</fullName>
        <ecNumber evidence="1">4.1.99.17</ecNumber>
    </recommendedName>
    <alternativeName>
        <fullName evidence="1">Hydroxymethylpyrimidine phosphate synthase</fullName>
        <shortName evidence="1">HMP-P synthase</shortName>
        <shortName evidence="1">HMP-phosphate synthase</shortName>
        <shortName evidence="1">HMPP synthase</shortName>
    </alternativeName>
    <alternativeName>
        <fullName evidence="1">Thiamine biosynthesis protein ThiC</fullName>
    </alternativeName>
</protein>
<gene>
    <name evidence="1" type="primary">thiC</name>
    <name type="ordered locus">Dhaf_2518</name>
</gene>
<comment type="function">
    <text evidence="1">Catalyzes the synthesis of the hydroxymethylpyrimidine phosphate (HMP-P) moiety of thiamine from aminoimidazole ribotide (AIR) in a radical S-adenosyl-L-methionine (SAM)-dependent reaction.</text>
</comment>
<comment type="catalytic activity">
    <reaction evidence="1">
        <text>5-amino-1-(5-phospho-beta-D-ribosyl)imidazole + S-adenosyl-L-methionine = 4-amino-2-methyl-5-(phosphooxymethyl)pyrimidine + CO + 5'-deoxyadenosine + formate + L-methionine + 3 H(+)</text>
        <dbReference type="Rhea" id="RHEA:24840"/>
        <dbReference type="ChEBI" id="CHEBI:15378"/>
        <dbReference type="ChEBI" id="CHEBI:15740"/>
        <dbReference type="ChEBI" id="CHEBI:17245"/>
        <dbReference type="ChEBI" id="CHEBI:17319"/>
        <dbReference type="ChEBI" id="CHEBI:57844"/>
        <dbReference type="ChEBI" id="CHEBI:58354"/>
        <dbReference type="ChEBI" id="CHEBI:59789"/>
        <dbReference type="ChEBI" id="CHEBI:137981"/>
        <dbReference type="EC" id="4.1.99.17"/>
    </reaction>
</comment>
<comment type="cofactor">
    <cofactor evidence="1">
        <name>[4Fe-4S] cluster</name>
        <dbReference type="ChEBI" id="CHEBI:49883"/>
    </cofactor>
    <text evidence="1">Binds 1 [4Fe-4S] cluster per subunit. The cluster is coordinated with 3 cysteines and an exchangeable S-adenosyl-L-methionine.</text>
</comment>
<comment type="pathway">
    <text evidence="1">Cofactor biosynthesis; thiamine diphosphate biosynthesis.</text>
</comment>
<comment type="similarity">
    <text evidence="1">Belongs to the ThiC family.</text>
</comment>
<accession>B8FUD2</accession>
<name>THIC_DESHD</name>
<dbReference type="EC" id="4.1.99.17" evidence="1"/>
<dbReference type="EMBL" id="CP001336">
    <property type="protein sequence ID" value="ACL20546.1"/>
    <property type="molecule type" value="Genomic_DNA"/>
</dbReference>
<dbReference type="RefSeq" id="WP_015944075.1">
    <property type="nucleotide sequence ID" value="NC_011830.1"/>
</dbReference>
<dbReference type="SMR" id="B8FUD2"/>
<dbReference type="KEGG" id="dhd:Dhaf_2518"/>
<dbReference type="HOGENOM" id="CLU_013181_2_2_9"/>
<dbReference type="UniPathway" id="UPA00060"/>
<dbReference type="Proteomes" id="UP000007726">
    <property type="component" value="Chromosome"/>
</dbReference>
<dbReference type="GO" id="GO:0005829">
    <property type="term" value="C:cytosol"/>
    <property type="evidence" value="ECO:0007669"/>
    <property type="project" value="TreeGrafter"/>
</dbReference>
<dbReference type="GO" id="GO:0051539">
    <property type="term" value="F:4 iron, 4 sulfur cluster binding"/>
    <property type="evidence" value="ECO:0007669"/>
    <property type="project" value="UniProtKB-KW"/>
</dbReference>
<dbReference type="GO" id="GO:0016830">
    <property type="term" value="F:carbon-carbon lyase activity"/>
    <property type="evidence" value="ECO:0007669"/>
    <property type="project" value="InterPro"/>
</dbReference>
<dbReference type="GO" id="GO:0008270">
    <property type="term" value="F:zinc ion binding"/>
    <property type="evidence" value="ECO:0007669"/>
    <property type="project" value="UniProtKB-UniRule"/>
</dbReference>
<dbReference type="GO" id="GO:0009228">
    <property type="term" value="P:thiamine biosynthetic process"/>
    <property type="evidence" value="ECO:0007669"/>
    <property type="project" value="UniProtKB-KW"/>
</dbReference>
<dbReference type="GO" id="GO:0009229">
    <property type="term" value="P:thiamine diphosphate biosynthetic process"/>
    <property type="evidence" value="ECO:0007669"/>
    <property type="project" value="UniProtKB-UniRule"/>
</dbReference>
<dbReference type="FunFam" id="3.20.20.540:FF:000001">
    <property type="entry name" value="Phosphomethylpyrimidine synthase"/>
    <property type="match status" value="1"/>
</dbReference>
<dbReference type="Gene3D" id="6.10.250.620">
    <property type="match status" value="1"/>
</dbReference>
<dbReference type="Gene3D" id="3.20.20.540">
    <property type="entry name" value="Radical SAM ThiC family, central domain"/>
    <property type="match status" value="1"/>
</dbReference>
<dbReference type="HAMAP" id="MF_00089">
    <property type="entry name" value="ThiC"/>
    <property type="match status" value="1"/>
</dbReference>
<dbReference type="InterPro" id="IPR037509">
    <property type="entry name" value="ThiC"/>
</dbReference>
<dbReference type="InterPro" id="IPR038521">
    <property type="entry name" value="ThiC/Bza_core_dom"/>
</dbReference>
<dbReference type="InterPro" id="IPR002817">
    <property type="entry name" value="ThiC/BzaA/B"/>
</dbReference>
<dbReference type="NCBIfam" id="NF009895">
    <property type="entry name" value="PRK13352.1"/>
    <property type="match status" value="1"/>
</dbReference>
<dbReference type="NCBIfam" id="TIGR00190">
    <property type="entry name" value="thiC"/>
    <property type="match status" value="1"/>
</dbReference>
<dbReference type="PANTHER" id="PTHR30557:SF1">
    <property type="entry name" value="PHOSPHOMETHYLPYRIMIDINE SYNTHASE, CHLOROPLASTIC"/>
    <property type="match status" value="1"/>
</dbReference>
<dbReference type="PANTHER" id="PTHR30557">
    <property type="entry name" value="THIAMINE BIOSYNTHESIS PROTEIN THIC"/>
    <property type="match status" value="1"/>
</dbReference>
<dbReference type="Pfam" id="PF01964">
    <property type="entry name" value="ThiC_Rad_SAM"/>
    <property type="match status" value="1"/>
</dbReference>
<dbReference type="SFLD" id="SFLDF00407">
    <property type="entry name" value="phosphomethylpyrimidine_syntha"/>
    <property type="match status" value="1"/>
</dbReference>
<dbReference type="SFLD" id="SFLDG01114">
    <property type="entry name" value="phosphomethylpyrimidine_syntha"/>
    <property type="match status" value="1"/>
</dbReference>
<dbReference type="SFLD" id="SFLDS00113">
    <property type="entry name" value="Radical_SAM_Phosphomethylpyrim"/>
    <property type="match status" value="1"/>
</dbReference>